<keyword id="KW-0143">Chaperone</keyword>
<keyword id="KW-0963">Cytoplasm</keyword>
<keyword id="KW-0690">Ribosome biogenesis</keyword>
<keyword id="KW-0698">rRNA processing</keyword>
<evidence type="ECO:0000255" key="1">
    <source>
        <dbReference type="HAMAP-Rule" id="MF_00014"/>
    </source>
</evidence>
<gene>
    <name evidence="1" type="primary">rimM</name>
    <name type="ordered locus">Bcer98_2494</name>
</gene>
<sequence length="171" mass="19471">MTKWFNVGKIVNTHGVRGEVRVISRTDFPEERYKVGNTLYIWGEKGTEPLPVKVTSHRQHKTFDLLTFEGYSNVNEVEKFKGSLLKVPEEQLGELAEGEYYYHEVIGCKVVTENGEELGTITEILSPGANDVWVIKRPKGQDLLIPYIDDIVLQVNVEQKQVTIHVMEGLL</sequence>
<protein>
    <recommendedName>
        <fullName evidence="1">Ribosome maturation factor RimM</fullName>
    </recommendedName>
</protein>
<reference key="1">
    <citation type="journal article" date="2008" name="Chem. Biol. Interact.">
        <title>Extending the Bacillus cereus group genomics to putative food-borne pathogens of different toxicity.</title>
        <authorList>
            <person name="Lapidus A."/>
            <person name="Goltsman E."/>
            <person name="Auger S."/>
            <person name="Galleron N."/>
            <person name="Segurens B."/>
            <person name="Dossat C."/>
            <person name="Land M.L."/>
            <person name="Broussolle V."/>
            <person name="Brillard J."/>
            <person name="Guinebretiere M.-H."/>
            <person name="Sanchis V."/>
            <person name="Nguen-the C."/>
            <person name="Lereclus D."/>
            <person name="Richardson P."/>
            <person name="Wincker P."/>
            <person name="Weissenbach J."/>
            <person name="Ehrlich S.D."/>
            <person name="Sorokin A."/>
        </authorList>
    </citation>
    <scope>NUCLEOTIDE SEQUENCE [LARGE SCALE GENOMIC DNA]</scope>
    <source>
        <strain>DSM 22905 / CIP 110041 / 391-98 / NVH 391-98</strain>
    </source>
</reference>
<dbReference type="EMBL" id="CP000764">
    <property type="protein sequence ID" value="ABS22730.1"/>
    <property type="molecule type" value="Genomic_DNA"/>
</dbReference>
<dbReference type="RefSeq" id="WP_012094937.1">
    <property type="nucleotide sequence ID" value="NC_009674.1"/>
</dbReference>
<dbReference type="SMR" id="A7GRH2"/>
<dbReference type="STRING" id="315749.Bcer98_2494"/>
<dbReference type="GeneID" id="33897749"/>
<dbReference type="KEGG" id="bcy:Bcer98_2494"/>
<dbReference type="eggNOG" id="COG0806">
    <property type="taxonomic scope" value="Bacteria"/>
</dbReference>
<dbReference type="HOGENOM" id="CLU_077636_3_1_9"/>
<dbReference type="OrthoDB" id="9810331at2"/>
<dbReference type="Proteomes" id="UP000002300">
    <property type="component" value="Chromosome"/>
</dbReference>
<dbReference type="GO" id="GO:0005737">
    <property type="term" value="C:cytoplasm"/>
    <property type="evidence" value="ECO:0007669"/>
    <property type="project" value="UniProtKB-SubCell"/>
</dbReference>
<dbReference type="GO" id="GO:0005840">
    <property type="term" value="C:ribosome"/>
    <property type="evidence" value="ECO:0007669"/>
    <property type="project" value="InterPro"/>
</dbReference>
<dbReference type="GO" id="GO:0043022">
    <property type="term" value="F:ribosome binding"/>
    <property type="evidence" value="ECO:0007669"/>
    <property type="project" value="InterPro"/>
</dbReference>
<dbReference type="GO" id="GO:0042274">
    <property type="term" value="P:ribosomal small subunit biogenesis"/>
    <property type="evidence" value="ECO:0007669"/>
    <property type="project" value="UniProtKB-UniRule"/>
</dbReference>
<dbReference type="GO" id="GO:0006364">
    <property type="term" value="P:rRNA processing"/>
    <property type="evidence" value="ECO:0007669"/>
    <property type="project" value="UniProtKB-UniRule"/>
</dbReference>
<dbReference type="Gene3D" id="2.30.30.240">
    <property type="entry name" value="PRC-barrel domain"/>
    <property type="match status" value="1"/>
</dbReference>
<dbReference type="Gene3D" id="2.40.30.60">
    <property type="entry name" value="RimM"/>
    <property type="match status" value="1"/>
</dbReference>
<dbReference type="HAMAP" id="MF_00014">
    <property type="entry name" value="Ribosome_mat_RimM"/>
    <property type="match status" value="1"/>
</dbReference>
<dbReference type="InterPro" id="IPR027275">
    <property type="entry name" value="PRC-brl_dom"/>
</dbReference>
<dbReference type="InterPro" id="IPR011033">
    <property type="entry name" value="PRC_barrel-like_sf"/>
</dbReference>
<dbReference type="InterPro" id="IPR011961">
    <property type="entry name" value="RimM"/>
</dbReference>
<dbReference type="InterPro" id="IPR002676">
    <property type="entry name" value="RimM_N"/>
</dbReference>
<dbReference type="InterPro" id="IPR036976">
    <property type="entry name" value="RimM_N_sf"/>
</dbReference>
<dbReference type="InterPro" id="IPR009000">
    <property type="entry name" value="Transl_B-barrel_sf"/>
</dbReference>
<dbReference type="NCBIfam" id="TIGR02273">
    <property type="entry name" value="16S_RimM"/>
    <property type="match status" value="1"/>
</dbReference>
<dbReference type="PANTHER" id="PTHR33692">
    <property type="entry name" value="RIBOSOME MATURATION FACTOR RIMM"/>
    <property type="match status" value="1"/>
</dbReference>
<dbReference type="PANTHER" id="PTHR33692:SF1">
    <property type="entry name" value="RIBOSOME MATURATION FACTOR RIMM"/>
    <property type="match status" value="1"/>
</dbReference>
<dbReference type="Pfam" id="PF05239">
    <property type="entry name" value="PRC"/>
    <property type="match status" value="1"/>
</dbReference>
<dbReference type="Pfam" id="PF01782">
    <property type="entry name" value="RimM"/>
    <property type="match status" value="1"/>
</dbReference>
<dbReference type="SUPFAM" id="SSF50346">
    <property type="entry name" value="PRC-barrel domain"/>
    <property type="match status" value="1"/>
</dbReference>
<dbReference type="SUPFAM" id="SSF50447">
    <property type="entry name" value="Translation proteins"/>
    <property type="match status" value="1"/>
</dbReference>
<proteinExistence type="inferred from homology"/>
<accession>A7GRH2</accession>
<feature type="chain" id="PRO_1000074018" description="Ribosome maturation factor RimM">
    <location>
        <begin position="1"/>
        <end position="171"/>
    </location>
</feature>
<feature type="domain" description="PRC barrel" evidence="1">
    <location>
        <begin position="97"/>
        <end position="170"/>
    </location>
</feature>
<name>RIMM_BACCN</name>
<organism>
    <name type="scientific">Bacillus cytotoxicus (strain DSM 22905 / CIP 110041 / 391-98 / NVH 391-98)</name>
    <dbReference type="NCBI Taxonomy" id="315749"/>
    <lineage>
        <taxon>Bacteria</taxon>
        <taxon>Bacillati</taxon>
        <taxon>Bacillota</taxon>
        <taxon>Bacilli</taxon>
        <taxon>Bacillales</taxon>
        <taxon>Bacillaceae</taxon>
        <taxon>Bacillus</taxon>
        <taxon>Bacillus cereus group</taxon>
    </lineage>
</organism>
<comment type="function">
    <text evidence="1">An accessory protein needed during the final step in the assembly of 30S ribosomal subunit, possibly for assembly of the head region. Essential for efficient processing of 16S rRNA. May be needed both before and after RbfA during the maturation of 16S rRNA. It has affinity for free ribosomal 30S subunits but not for 70S ribosomes.</text>
</comment>
<comment type="subunit">
    <text evidence="1">Binds ribosomal protein uS19.</text>
</comment>
<comment type="subcellular location">
    <subcellularLocation>
        <location evidence="1">Cytoplasm</location>
    </subcellularLocation>
</comment>
<comment type="domain">
    <text evidence="1">The PRC barrel domain binds ribosomal protein uS19.</text>
</comment>
<comment type="similarity">
    <text evidence="1">Belongs to the RimM family.</text>
</comment>